<protein>
    <recommendedName>
        <fullName evidence="6">Ethanolaminephosphotransferase 1</fullName>
        <ecNumber evidence="1">2.7.8.1</ecNumber>
    </recommendedName>
    <alternativeName>
        <fullName evidence="1">Selenoprotein I</fullName>
        <shortName evidence="1">SelI</shortName>
    </alternativeName>
</protein>
<feature type="initiator methionine" description="Removed" evidence="1">
    <location>
        <position position="1"/>
    </location>
</feature>
<feature type="chain" id="PRO_0000056814" description="Ethanolaminephosphotransferase 1">
    <location>
        <begin position="2"/>
        <end position="398"/>
    </location>
</feature>
<feature type="transmembrane region" description="Helical" evidence="2">
    <location>
        <begin position="47"/>
        <end position="69"/>
    </location>
</feature>
<feature type="transmembrane region" description="Helical" evidence="2">
    <location>
        <begin position="84"/>
        <end position="103"/>
    </location>
</feature>
<feature type="transmembrane region" description="Helical" evidence="2">
    <location>
        <begin position="123"/>
        <end position="145"/>
    </location>
</feature>
<feature type="transmembrane region" description="Helical" evidence="2">
    <location>
        <begin position="150"/>
        <end position="172"/>
    </location>
</feature>
<feature type="transmembrane region" description="Helical" evidence="2">
    <location>
        <begin position="179"/>
        <end position="201"/>
    </location>
</feature>
<feature type="transmembrane region" description="Helical" evidence="2">
    <location>
        <begin position="221"/>
        <end position="243"/>
    </location>
</feature>
<feature type="transmembrane region" description="Helical" evidence="2">
    <location>
        <begin position="256"/>
        <end position="278"/>
    </location>
</feature>
<feature type="transmembrane region" description="Helical" evidence="2">
    <location>
        <begin position="291"/>
        <end position="310"/>
    </location>
</feature>
<feature type="transmembrane region" description="Helical" evidence="2">
    <location>
        <begin position="319"/>
        <end position="341"/>
    </location>
</feature>
<feature type="transmembrane region" description="Helical" evidence="2">
    <location>
        <begin position="345"/>
        <end position="367"/>
    </location>
</feature>
<feature type="non-standard amino acid" description="Selenocysteine" evidence="1">
    <location>
        <position position="388"/>
    </location>
</feature>
<feature type="modified residue" description="N-acetylalanine" evidence="1">
    <location>
        <position position="2"/>
    </location>
</feature>
<proteinExistence type="evidence at protein level"/>
<accession>Q80TA1</accession>
<accession>Q3KQQ5</accession>
<accession>Q8BG08</accession>
<dbReference type="EC" id="2.7.8.1" evidence="1"/>
<dbReference type="EMBL" id="AK122544">
    <property type="protein sequence ID" value="BAC65826.1"/>
    <property type="status" value="ALT_SEQ"/>
    <property type="molecule type" value="mRNA"/>
</dbReference>
<dbReference type="EMBL" id="AK048011">
    <property type="protein sequence ID" value="BAC33214.1"/>
    <property type="status" value="ALT_SEQ"/>
    <property type="molecule type" value="mRNA"/>
</dbReference>
<dbReference type="EMBL" id="AK079325">
    <property type="protein sequence ID" value="BAC37608.1"/>
    <property type="status" value="ALT_SEQ"/>
    <property type="molecule type" value="mRNA"/>
</dbReference>
<dbReference type="EMBL" id="BC106097">
    <property type="protein sequence ID" value="AAI06098.2"/>
    <property type="molecule type" value="mRNA"/>
</dbReference>
<dbReference type="EMBL" id="BC115783">
    <property type="protein sequence ID" value="AAI15784.2"/>
    <property type="molecule type" value="mRNA"/>
</dbReference>
<dbReference type="EMBL" id="BC117551">
    <property type="protein sequence ID" value="AAI17552.2"/>
    <property type="molecule type" value="mRNA"/>
</dbReference>
<dbReference type="CCDS" id="CCDS51451.1"/>
<dbReference type="RefSeq" id="NP_081928.2">
    <property type="nucleotide sequence ID" value="NM_027652.3"/>
</dbReference>
<dbReference type="BioGRID" id="205731">
    <property type="interactions" value="1"/>
</dbReference>
<dbReference type="FunCoup" id="Q80TA1">
    <property type="interactions" value="1510"/>
</dbReference>
<dbReference type="STRING" id="10090.ENSMUSP00000118368"/>
<dbReference type="GlyGen" id="Q80TA1">
    <property type="glycosylation" value="1 site, 1 O-linked glycan (1 site)"/>
</dbReference>
<dbReference type="iPTMnet" id="Q80TA1"/>
<dbReference type="PhosphoSitePlus" id="Q80TA1"/>
<dbReference type="jPOST" id="Q80TA1"/>
<dbReference type="PaxDb" id="10090-ENSMUSP00000118368"/>
<dbReference type="PeptideAtlas" id="Q80TA1"/>
<dbReference type="ProteomicsDB" id="275874"/>
<dbReference type="Pumba" id="Q80TA1"/>
<dbReference type="Antibodypedia" id="60801">
    <property type="antibodies" value="15 antibodies from 7 providers"/>
</dbReference>
<dbReference type="DNASU" id="28042"/>
<dbReference type="Ensembl" id="ENSMUST00000145167.9">
    <property type="protein sequence ID" value="ENSMUSP00000118368.3"/>
    <property type="gene ID" value="ENSMUSG00000075703.17"/>
</dbReference>
<dbReference type="GeneID" id="28042"/>
<dbReference type="KEGG" id="mmu:28042"/>
<dbReference type="UCSC" id="uc008wvh.1">
    <property type="organism name" value="mouse"/>
</dbReference>
<dbReference type="AGR" id="MGI:107898"/>
<dbReference type="CTD" id="85465"/>
<dbReference type="MGI" id="MGI:107898">
    <property type="gene designation" value="Selenoi"/>
</dbReference>
<dbReference type="VEuPathDB" id="HostDB:ENSMUSG00000075703"/>
<dbReference type="eggNOG" id="KOG2877">
    <property type="taxonomic scope" value="Eukaryota"/>
</dbReference>
<dbReference type="GeneTree" id="ENSGT00950000183117"/>
<dbReference type="HOGENOM" id="CLU_035066_2_0_1"/>
<dbReference type="InParanoid" id="Q80TA1"/>
<dbReference type="OMA" id="QNMGQGW"/>
<dbReference type="OrthoDB" id="196717at2759"/>
<dbReference type="PhylomeDB" id="Q80TA1"/>
<dbReference type="TreeFam" id="TF313270"/>
<dbReference type="Reactome" id="R-MMU-1483213">
    <property type="pathway name" value="Synthesis of PE"/>
</dbReference>
<dbReference type="UniPathway" id="UPA00558">
    <property type="reaction ID" value="UER00743"/>
</dbReference>
<dbReference type="BioGRID-ORCS" id="28042">
    <property type="hits" value="16 hits in 80 CRISPR screens"/>
</dbReference>
<dbReference type="ChiTaRS" id="Selenoi">
    <property type="organism name" value="mouse"/>
</dbReference>
<dbReference type="PRO" id="PR:Q80TA1"/>
<dbReference type="Proteomes" id="UP000000589">
    <property type="component" value="Chromosome 5"/>
</dbReference>
<dbReference type="RNAct" id="Q80TA1">
    <property type="molecule type" value="protein"/>
</dbReference>
<dbReference type="Bgee" id="ENSMUSG00000075703">
    <property type="expression patterns" value="Expressed in superior cervical ganglion and 216 other cell types or tissues"/>
</dbReference>
<dbReference type="ExpressionAtlas" id="Q80TA1">
    <property type="expression patterns" value="baseline and differential"/>
</dbReference>
<dbReference type="GO" id="GO:0005789">
    <property type="term" value="C:endoplasmic reticulum membrane"/>
    <property type="evidence" value="ECO:0007669"/>
    <property type="project" value="UniProtKB-SubCell"/>
</dbReference>
<dbReference type="GO" id="GO:0004307">
    <property type="term" value="F:ethanolaminephosphotransferase activity"/>
    <property type="evidence" value="ECO:0000315"/>
    <property type="project" value="UniProtKB"/>
</dbReference>
<dbReference type="GO" id="GO:0046872">
    <property type="term" value="F:metal ion binding"/>
    <property type="evidence" value="ECO:0007669"/>
    <property type="project" value="UniProtKB-KW"/>
</dbReference>
<dbReference type="GO" id="GO:0008611">
    <property type="term" value="P:ether lipid biosynthetic process"/>
    <property type="evidence" value="ECO:0000315"/>
    <property type="project" value="UniProtKB"/>
</dbReference>
<dbReference type="GO" id="GO:0042552">
    <property type="term" value="P:myelination"/>
    <property type="evidence" value="ECO:0000315"/>
    <property type="project" value="UniProtKB"/>
</dbReference>
<dbReference type="GO" id="GO:0006646">
    <property type="term" value="P:phosphatidylethanolamine biosynthetic process"/>
    <property type="evidence" value="ECO:0000250"/>
    <property type="project" value="UniProtKB"/>
</dbReference>
<dbReference type="FunFam" id="1.20.120.1760:FF:000006">
    <property type="entry name" value="Putative ethanolaminephosphotransferase 1"/>
    <property type="match status" value="1"/>
</dbReference>
<dbReference type="Gene3D" id="1.20.120.1760">
    <property type="match status" value="1"/>
</dbReference>
<dbReference type="InterPro" id="IPR000462">
    <property type="entry name" value="CDP-OH_P_trans"/>
</dbReference>
<dbReference type="InterPro" id="IPR043130">
    <property type="entry name" value="CDP-OH_PTrfase_TM_dom"/>
</dbReference>
<dbReference type="InterPro" id="IPR048254">
    <property type="entry name" value="CDP_ALCOHOL_P_TRANSF_CS"/>
</dbReference>
<dbReference type="InterPro" id="IPR014472">
    <property type="entry name" value="CHOPT"/>
</dbReference>
<dbReference type="PANTHER" id="PTHR10414">
    <property type="entry name" value="ETHANOLAMINEPHOSPHOTRANSFERASE"/>
    <property type="match status" value="1"/>
</dbReference>
<dbReference type="PANTHER" id="PTHR10414:SF47">
    <property type="entry name" value="ETHANOLAMINEPHOSPHOTRANSFERASE 1"/>
    <property type="match status" value="1"/>
</dbReference>
<dbReference type="Pfam" id="PF01066">
    <property type="entry name" value="CDP-OH_P_transf"/>
    <property type="match status" value="1"/>
</dbReference>
<dbReference type="PIRSF" id="PIRSF015665">
    <property type="entry name" value="CHOPT"/>
    <property type="match status" value="1"/>
</dbReference>
<dbReference type="PROSITE" id="PS00379">
    <property type="entry name" value="CDP_ALCOHOL_P_TRANSF"/>
    <property type="match status" value="1"/>
</dbReference>
<comment type="function">
    <text evidence="1 4">Ethanolaminephosphotransferase that catalyzes the transfer of phosphoethanolamine (PE) from CDP-ethanolamine to lipid acceptors, the final step in the synthesis of PE via the 'Kennedy' pathway (By similarity). PE is the second most abundant phospholipid of membranes in mammals and is involved in various membrane-related cellular processes (By similarity). The enzyme is critical for the synthesis of several PE species and also catalyzes the synthesis of plasmanyl-PE, a lipid required for proper myelination and neurodevelopment, from 1-alkyl-2-acylglycerol (PubMed:38582453).</text>
</comment>
<comment type="catalytic activity">
    <reaction evidence="1">
        <text>CDP-ethanolamine + a 1,2-diacyl-sn-glycerol = a 1,2-diacyl-sn-glycero-3-phosphoethanolamine + CMP + H(+)</text>
        <dbReference type="Rhea" id="RHEA:32943"/>
        <dbReference type="ChEBI" id="CHEBI:15378"/>
        <dbReference type="ChEBI" id="CHEBI:17815"/>
        <dbReference type="ChEBI" id="CHEBI:57876"/>
        <dbReference type="ChEBI" id="CHEBI:60377"/>
        <dbReference type="ChEBI" id="CHEBI:64612"/>
        <dbReference type="EC" id="2.7.8.1"/>
    </reaction>
    <physiologicalReaction direction="left-to-right" evidence="1">
        <dbReference type="Rhea" id="RHEA:32944"/>
    </physiologicalReaction>
</comment>
<comment type="catalytic activity">
    <reaction evidence="7">
        <text>1-O-alkyl-2-acyl-sn-glycerol + CDP-ethanolamine = a 1-O-alkyl-2-acyl-sn-glycero-3-phosphoethanolamine + CMP + H(+)</text>
        <dbReference type="Rhea" id="RHEA:36187"/>
        <dbReference type="ChEBI" id="CHEBI:15378"/>
        <dbReference type="ChEBI" id="CHEBI:52595"/>
        <dbReference type="ChEBI" id="CHEBI:57876"/>
        <dbReference type="ChEBI" id="CHEBI:60377"/>
        <dbReference type="ChEBI" id="CHEBI:60520"/>
    </reaction>
    <physiologicalReaction direction="left-to-right" evidence="7">
        <dbReference type="Rhea" id="RHEA:36188"/>
    </physiologicalReaction>
</comment>
<comment type="cofactor">
    <cofactor evidence="1">
        <name>Mg(2+)</name>
        <dbReference type="ChEBI" id="CHEBI:18420"/>
    </cofactor>
    <cofactor evidence="1">
        <name>Mn(2+)</name>
        <dbReference type="ChEBI" id="CHEBI:29035"/>
    </cofactor>
</comment>
<comment type="pathway">
    <text evidence="1">Phospholipid metabolism; phosphatidylethanolamine biosynthesis; phosphatidylethanolamine from ethanolamine: step 3/3.</text>
</comment>
<comment type="subcellular location">
    <subcellularLocation>
        <location evidence="1">Endoplasmic reticulum membrane</location>
        <topology evidence="1">Multi-pass membrane protein</topology>
    </subcellularLocation>
</comment>
<comment type="disruption phenotype">
    <text evidence="3 4">Embryonic lethality before uterine implantation of embryos on 6 days post coitum (dpc) (PubMed:32502470). Conditional deletion in the nervous system leads to motor deficits and neuropathology, including hypomyelination, elevated reactive gliosis and microcephaly (PubMed:38582453). At the cellular level, deletion in the nervous system affects brain lipid composition, characterized by decreased levels of all phosphoethanolamine (PE), such as diacyl-PE, plasmanyl-PE and plasmenyl-PE (PubMed:38582453).</text>
</comment>
<comment type="similarity">
    <text evidence="6">Belongs to the CDP-alcohol phosphatidyltransferase class-I family.</text>
</comment>
<comment type="sequence caution" evidence="6">
    <conflict type="erroneous termination">
        <sequence resource="EMBL-CDS" id="BAC33214"/>
    </conflict>
    <text>Truncated C-terminus.</text>
</comment>
<comment type="sequence caution" evidence="6">
    <conflict type="erroneous termination">
        <sequence resource="EMBL-CDS" id="BAC37608"/>
    </conflict>
    <text>Truncated C-terminus.</text>
</comment>
<comment type="sequence caution" evidence="6">
    <conflict type="erroneous termination">
        <sequence resource="EMBL-CDS" id="BAC65826"/>
    </conflict>
    <text>Truncated C-terminus.</text>
</comment>
<organism>
    <name type="scientific">Mus musculus</name>
    <name type="common">Mouse</name>
    <dbReference type="NCBI Taxonomy" id="10090"/>
    <lineage>
        <taxon>Eukaryota</taxon>
        <taxon>Metazoa</taxon>
        <taxon>Chordata</taxon>
        <taxon>Craniata</taxon>
        <taxon>Vertebrata</taxon>
        <taxon>Euteleostomi</taxon>
        <taxon>Mammalia</taxon>
        <taxon>Eutheria</taxon>
        <taxon>Euarchontoglires</taxon>
        <taxon>Glires</taxon>
        <taxon>Rodentia</taxon>
        <taxon>Myomorpha</taxon>
        <taxon>Muroidea</taxon>
        <taxon>Muridae</taxon>
        <taxon>Murinae</taxon>
        <taxon>Mus</taxon>
        <taxon>Mus</taxon>
    </lineage>
</organism>
<name>EPT1_MOUSE</name>
<evidence type="ECO:0000250" key="1">
    <source>
        <dbReference type="UniProtKB" id="Q9C0D9"/>
    </source>
</evidence>
<evidence type="ECO:0000255" key="2"/>
<evidence type="ECO:0000269" key="3">
    <source>
    </source>
</evidence>
<evidence type="ECO:0000269" key="4">
    <source>
    </source>
</evidence>
<evidence type="ECO:0000303" key="5">
    <source>
    </source>
</evidence>
<evidence type="ECO:0000305" key="6"/>
<evidence type="ECO:0000305" key="7">
    <source>
    </source>
</evidence>
<evidence type="ECO:0000312" key="8">
    <source>
        <dbReference type="EMBL" id="AAI06098.2"/>
    </source>
</evidence>
<evidence type="ECO:0000312" key="9">
    <source>
        <dbReference type="EMBL" id="BAC65826.1"/>
    </source>
</evidence>
<evidence type="ECO:0000312" key="10">
    <source>
        <dbReference type="MGI" id="MGI:107898"/>
    </source>
</evidence>
<gene>
    <name evidence="5 10" type="primary">Selenoi</name>
    <name evidence="8" type="synonym">D5Wsu178e</name>
    <name evidence="10" type="synonym">Ept1</name>
    <name evidence="9" type="synonym">Kiaa1724</name>
</gene>
<reference key="1">
    <citation type="journal article" date="2003" name="DNA Res.">
        <title>Prediction of the coding sequences of mouse homologues of KIAA gene: II. The complete nucleotide sequences of 400 mouse KIAA-homologous cDNAs identified by screening of terminal sequences of cDNA clones randomly sampled from size-fractionated libraries.</title>
        <authorList>
            <person name="Okazaki N."/>
            <person name="Kikuno R."/>
            <person name="Ohara R."/>
            <person name="Inamoto S."/>
            <person name="Aizawa H."/>
            <person name="Yuasa S."/>
            <person name="Nakajima D."/>
            <person name="Nagase T."/>
            <person name="Ohara O."/>
            <person name="Koga H."/>
        </authorList>
    </citation>
    <scope>NUCLEOTIDE SEQUENCE [LARGE SCALE MRNA]</scope>
    <source>
        <tissue>Brain</tissue>
    </source>
</reference>
<reference key="2">
    <citation type="journal article" date="2005" name="Science">
        <title>The transcriptional landscape of the mammalian genome.</title>
        <authorList>
            <person name="Carninci P."/>
            <person name="Kasukawa T."/>
            <person name="Katayama S."/>
            <person name="Gough J."/>
            <person name="Frith M.C."/>
            <person name="Maeda N."/>
            <person name="Oyama R."/>
            <person name="Ravasi T."/>
            <person name="Lenhard B."/>
            <person name="Wells C."/>
            <person name="Kodzius R."/>
            <person name="Shimokawa K."/>
            <person name="Bajic V.B."/>
            <person name="Brenner S.E."/>
            <person name="Batalov S."/>
            <person name="Forrest A.R."/>
            <person name="Zavolan M."/>
            <person name="Davis M.J."/>
            <person name="Wilming L.G."/>
            <person name="Aidinis V."/>
            <person name="Allen J.E."/>
            <person name="Ambesi-Impiombato A."/>
            <person name="Apweiler R."/>
            <person name="Aturaliya R.N."/>
            <person name="Bailey T.L."/>
            <person name="Bansal M."/>
            <person name="Baxter L."/>
            <person name="Beisel K.W."/>
            <person name="Bersano T."/>
            <person name="Bono H."/>
            <person name="Chalk A.M."/>
            <person name="Chiu K.P."/>
            <person name="Choudhary V."/>
            <person name="Christoffels A."/>
            <person name="Clutterbuck D.R."/>
            <person name="Crowe M.L."/>
            <person name="Dalla E."/>
            <person name="Dalrymple B.P."/>
            <person name="de Bono B."/>
            <person name="Della Gatta G."/>
            <person name="di Bernardo D."/>
            <person name="Down T."/>
            <person name="Engstrom P."/>
            <person name="Fagiolini M."/>
            <person name="Faulkner G."/>
            <person name="Fletcher C.F."/>
            <person name="Fukushima T."/>
            <person name="Furuno M."/>
            <person name="Futaki S."/>
            <person name="Gariboldi M."/>
            <person name="Georgii-Hemming P."/>
            <person name="Gingeras T.R."/>
            <person name="Gojobori T."/>
            <person name="Green R.E."/>
            <person name="Gustincich S."/>
            <person name="Harbers M."/>
            <person name="Hayashi Y."/>
            <person name="Hensch T.K."/>
            <person name="Hirokawa N."/>
            <person name="Hill D."/>
            <person name="Huminiecki L."/>
            <person name="Iacono M."/>
            <person name="Ikeo K."/>
            <person name="Iwama A."/>
            <person name="Ishikawa T."/>
            <person name="Jakt M."/>
            <person name="Kanapin A."/>
            <person name="Katoh M."/>
            <person name="Kawasawa Y."/>
            <person name="Kelso J."/>
            <person name="Kitamura H."/>
            <person name="Kitano H."/>
            <person name="Kollias G."/>
            <person name="Krishnan S.P."/>
            <person name="Kruger A."/>
            <person name="Kummerfeld S.K."/>
            <person name="Kurochkin I.V."/>
            <person name="Lareau L.F."/>
            <person name="Lazarevic D."/>
            <person name="Lipovich L."/>
            <person name="Liu J."/>
            <person name="Liuni S."/>
            <person name="McWilliam S."/>
            <person name="Madan Babu M."/>
            <person name="Madera M."/>
            <person name="Marchionni L."/>
            <person name="Matsuda H."/>
            <person name="Matsuzawa S."/>
            <person name="Miki H."/>
            <person name="Mignone F."/>
            <person name="Miyake S."/>
            <person name="Morris K."/>
            <person name="Mottagui-Tabar S."/>
            <person name="Mulder N."/>
            <person name="Nakano N."/>
            <person name="Nakauchi H."/>
            <person name="Ng P."/>
            <person name="Nilsson R."/>
            <person name="Nishiguchi S."/>
            <person name="Nishikawa S."/>
            <person name="Nori F."/>
            <person name="Ohara O."/>
            <person name="Okazaki Y."/>
            <person name="Orlando V."/>
            <person name="Pang K.C."/>
            <person name="Pavan W.J."/>
            <person name="Pavesi G."/>
            <person name="Pesole G."/>
            <person name="Petrovsky N."/>
            <person name="Piazza S."/>
            <person name="Reed J."/>
            <person name="Reid J.F."/>
            <person name="Ring B.Z."/>
            <person name="Ringwald M."/>
            <person name="Rost B."/>
            <person name="Ruan Y."/>
            <person name="Salzberg S.L."/>
            <person name="Sandelin A."/>
            <person name="Schneider C."/>
            <person name="Schoenbach C."/>
            <person name="Sekiguchi K."/>
            <person name="Semple C.A."/>
            <person name="Seno S."/>
            <person name="Sessa L."/>
            <person name="Sheng Y."/>
            <person name="Shibata Y."/>
            <person name="Shimada H."/>
            <person name="Shimada K."/>
            <person name="Silva D."/>
            <person name="Sinclair B."/>
            <person name="Sperling S."/>
            <person name="Stupka E."/>
            <person name="Sugiura K."/>
            <person name="Sultana R."/>
            <person name="Takenaka Y."/>
            <person name="Taki K."/>
            <person name="Tammoja K."/>
            <person name="Tan S.L."/>
            <person name="Tang S."/>
            <person name="Taylor M.S."/>
            <person name="Tegner J."/>
            <person name="Teichmann S.A."/>
            <person name="Ueda H.R."/>
            <person name="van Nimwegen E."/>
            <person name="Verardo R."/>
            <person name="Wei C.L."/>
            <person name="Yagi K."/>
            <person name="Yamanishi H."/>
            <person name="Zabarovsky E."/>
            <person name="Zhu S."/>
            <person name="Zimmer A."/>
            <person name="Hide W."/>
            <person name="Bult C."/>
            <person name="Grimmond S.M."/>
            <person name="Teasdale R.D."/>
            <person name="Liu E.T."/>
            <person name="Brusic V."/>
            <person name="Quackenbush J."/>
            <person name="Wahlestedt C."/>
            <person name="Mattick J.S."/>
            <person name="Hume D.A."/>
            <person name="Kai C."/>
            <person name="Sasaki D."/>
            <person name="Tomaru Y."/>
            <person name="Fukuda S."/>
            <person name="Kanamori-Katayama M."/>
            <person name="Suzuki M."/>
            <person name="Aoki J."/>
            <person name="Arakawa T."/>
            <person name="Iida J."/>
            <person name="Imamura K."/>
            <person name="Itoh M."/>
            <person name="Kato T."/>
            <person name="Kawaji H."/>
            <person name="Kawagashira N."/>
            <person name="Kawashima T."/>
            <person name="Kojima M."/>
            <person name="Kondo S."/>
            <person name="Konno H."/>
            <person name="Nakano K."/>
            <person name="Ninomiya N."/>
            <person name="Nishio T."/>
            <person name="Okada M."/>
            <person name="Plessy C."/>
            <person name="Shibata K."/>
            <person name="Shiraki T."/>
            <person name="Suzuki S."/>
            <person name="Tagami M."/>
            <person name="Waki K."/>
            <person name="Watahiki A."/>
            <person name="Okamura-Oho Y."/>
            <person name="Suzuki H."/>
            <person name="Kawai J."/>
            <person name="Hayashizaki Y."/>
        </authorList>
    </citation>
    <scope>NUCLEOTIDE SEQUENCE [LARGE SCALE MRNA]</scope>
    <source>
        <strain>C57BL/6J</strain>
        <tissue>Cerebellum</tissue>
        <tissue>Head</tissue>
    </source>
</reference>
<reference key="3">
    <citation type="journal article" date="2004" name="Genome Res.">
        <title>The status, quality, and expansion of the NIH full-length cDNA project: the Mammalian Gene Collection (MGC).</title>
        <authorList>
            <consortium name="The MGC Project Team"/>
        </authorList>
    </citation>
    <scope>NUCLEOTIDE SEQUENCE [LARGE SCALE MRNA]</scope>
    <source>
        <strain>FVB/N-3</strain>
        <tissue>Mammary tumor</tissue>
    </source>
</reference>
<reference key="4">
    <citation type="journal article" date="2020" name="Arch. Biochem. Biophys.">
        <title>Selenoprotein I is essential for murine embryogenesis.</title>
        <authorList>
            <person name="Avery J.C."/>
            <person name="Yamazaki Y."/>
            <person name="Hoffmann F.W."/>
            <person name="Folgelgren B."/>
            <person name="Hoffmann P.R."/>
        </authorList>
    </citation>
    <scope>DISRUPTION PHENOTYPE</scope>
</reference>
<reference key="5">
    <citation type="journal article" date="2024" name="J. Biol. Chem.">
        <title>Selenoprotein I is indispensable for ether lipid homeostasis and proper myelination.</title>
        <authorList>
            <person name="Nunes L.G.A."/>
            <person name="Ma C."/>
            <person name="Hoffmann F.W."/>
            <person name="Shay A.E."/>
            <person name="Pitts M.W."/>
            <person name="Hoffmann P.R."/>
        </authorList>
    </citation>
    <scope>FUNCTION</scope>
    <scope>CATALYTIC ACTIVITY</scope>
    <scope>DISRUPTION PHENOTYPE</scope>
</reference>
<sequence length="398" mass="45346">MAGYEYVSPEQLSGFDKYKYSALDTNPLSLYIMHPFWNTIVKVFPTWLAPNLITFSGFMLLVFNFLLLTYFDPDFYASAPGHKHVPDWVWIVVGILNFAAYTLDGVDGKQARRTNSSTPLGELFDHGLDSWSCVYFVVTVYSIFGRGPTGVSVFVLYLLLWVVLFSFILSHWEKYNTGVLFLPWGYDISQVTISFVYIVTAVVGVEAWYEPFLFNFLYRDLFTAMIIGCALCVTLPMSLLNFFRSYKSNTLKHKSVYEAMVPFFSPCLLFTLCTVWILWSPSDILEIHPRIFYFMVGTAFANITCQLIVCQMSSTRCPTLNWLLLPLLLVVAAVIVGAATSRLESALLYTLTAAFTLAHIHYGVQVVKQLSRHFQIYPFSLRKPNSDULGMEEQNIGL</sequence>
<keyword id="KW-0007">Acetylation</keyword>
<keyword id="KW-0256">Endoplasmic reticulum</keyword>
<keyword id="KW-0444">Lipid biosynthesis</keyword>
<keyword id="KW-0443">Lipid metabolism</keyword>
<keyword id="KW-0460">Magnesium</keyword>
<keyword id="KW-0464">Manganese</keyword>
<keyword id="KW-0472">Membrane</keyword>
<keyword id="KW-0479">Metal-binding</keyword>
<keyword id="KW-0594">Phospholipid biosynthesis</keyword>
<keyword id="KW-1208">Phospholipid metabolism</keyword>
<keyword id="KW-1185">Reference proteome</keyword>
<keyword id="KW-0712">Selenocysteine</keyword>
<keyword id="KW-0808">Transferase</keyword>
<keyword id="KW-0812">Transmembrane</keyword>
<keyword id="KW-1133">Transmembrane helix</keyword>